<keyword id="KW-0025">Alternative splicing</keyword>
<keyword id="KW-0067">ATP-binding</keyword>
<keyword id="KW-0156">Chromatin regulator</keyword>
<keyword id="KW-0175">Coiled coil</keyword>
<keyword id="KW-0378">Hydrolase</keyword>
<keyword id="KW-0547">Nucleotide-binding</keyword>
<keyword id="KW-0539">Nucleus</keyword>
<keyword id="KW-1185">Reference proteome</keyword>
<keyword id="KW-0677">Repeat</keyword>
<proteinExistence type="evidence at protein level"/>
<protein>
    <recommendedName>
        <fullName evidence="10">ISWI chromatin-remodeling complex ATPase CHR17</fullName>
        <ecNumber evidence="10">3.6.4.-</ecNumber>
    </recommendedName>
    <alternativeName>
        <fullName evidence="9">Protein CHROMATIN REMODELING 17</fullName>
    </alternativeName>
</protein>
<sequence>MARASKREVSSDEAYSSEEEEQVNDQANVEEDDDELEAVARSAGSDEEDVAPDEAPVSDDEVVPVEDDAEEDEEDEEKAEISKREKARLKEMQKMKKQKIQQILDSQNASIDADMNNKGKGRIKYLLQQTELFAHFAKSDPSPSQKKGKGRGRHSSKLTEEEEDEECLKEEEGGIVGSGGTRLLTQPACIQGKLRDYQLAGLNWLIRLYENGINGILADEMGLGKTLQTISLLAYLHEYRGINGPHMVVAPKSTLGNWMNEIRRFCPVLRAVKFLGNPEERRHIREELLVAGKFDICVTSFEMAIKEKTTLRRFSWRYIIIDEAHRIKNENSLLSKTMRLFSTNYRLLITGTPLQNNLHELWALLNFLLPEVFSSAETFDEWFQISGENDQQEVVQQLHKVLRPFLLRRLKSDVEKGLPPKKETILKVGMSQMQKQYYKALLQKDLEVVNGGGERKRLLNIAMQLRKCCNHPYLFQGAEPGPPYTTGDHLVTNAGKMVLLDKLLPKLKDRDSRVLIFSQMTRLLDILEDYLMYRGYQYCRIDGNTGGDERDASIEAYNKPGSEKFVFLLSTRAGGLGINLATADVVILYDSDWNPQVDLQAQDRAHRIGQKKEVQVFRFCTENAIEAKVIERAYKKLALDALVIQQGRLAEQKTVNKDELLQMVRYGAEMVFSSKDSTITDEDIDRIIAKGEEATAELDAKMKKFTEDAIQFKMDDSADFYDFDDDNKDESKVDFKKIVSENWNDPPKRERKRNYSEVEYFKQTLRQGAPAKPKEPRIPRMPQLHDFQFFNIQRLTELYEKEVRYLMQAHQKTQMKDTIEVDEPEEVGDPLTAEEVEEKELLLEEGFSTWSRRDFNAFIRACEKYGRNDIKSIASEMEGKTEEEVERYAQVFQVRYKELNDYDRIIKNIERGEARISRKDEIMKAIGKKLDRYRNPWLELKIQYGQNKGKLYNEECDRFMICMVHKLGYGNWDELKAAFRTSPLFRFDWFVKSRTTQELARRCDTLIRLIEKENQEFDERERQARKEKKLSKSATPSKRPSGRQANESPSSLLKKRKQLSMDDYGKRRK</sequence>
<gene>
    <name evidence="9" type="primary">CHR17</name>
    <name evidence="11" type="ordered locus">At5g18620</name>
</gene>
<evidence type="ECO:0000250" key="1">
    <source>
        <dbReference type="UniProtKB" id="O60264"/>
    </source>
</evidence>
<evidence type="ECO:0000255" key="2">
    <source>
        <dbReference type="PROSITE-ProRule" id="PRU00541"/>
    </source>
</evidence>
<evidence type="ECO:0000255" key="3">
    <source>
        <dbReference type="PROSITE-ProRule" id="PRU00542"/>
    </source>
</evidence>
<evidence type="ECO:0000255" key="4">
    <source>
        <dbReference type="PROSITE-ProRule" id="PRU00624"/>
    </source>
</evidence>
<evidence type="ECO:0000256" key="5">
    <source>
        <dbReference type="SAM" id="MobiDB-lite"/>
    </source>
</evidence>
<evidence type="ECO:0000269" key="6">
    <source>
    </source>
</evidence>
<evidence type="ECO:0000269" key="7">
    <source>
    </source>
</evidence>
<evidence type="ECO:0000269" key="8">
    <source>
    </source>
</evidence>
<evidence type="ECO:0000303" key="9">
    <source>
    </source>
</evidence>
<evidence type="ECO:0000305" key="10"/>
<evidence type="ECO:0000312" key="11">
    <source>
        <dbReference type="Araport" id="AT5G18620"/>
    </source>
</evidence>
<feature type="chain" id="PRO_0000435116" description="ISWI chromatin-remodeling complex ATPase CHR17">
    <location>
        <begin position="1"/>
        <end position="1069"/>
    </location>
</feature>
<feature type="domain" description="Helicase ATP-binding" evidence="2">
    <location>
        <begin position="206"/>
        <end position="371"/>
    </location>
</feature>
<feature type="domain" description="Helicase C-terminal" evidence="3">
    <location>
        <begin position="499"/>
        <end position="650"/>
    </location>
</feature>
<feature type="domain" description="SANT 1" evidence="4">
    <location>
        <begin position="845"/>
        <end position="897"/>
    </location>
</feature>
<feature type="domain" description="SANT 2" evidence="4">
    <location>
        <begin position="946"/>
        <end position="1007"/>
    </location>
</feature>
<feature type="region of interest" description="Disordered" evidence="5">
    <location>
        <begin position="1"/>
        <end position="93"/>
    </location>
</feature>
<feature type="region of interest" description="Disordered" evidence="5">
    <location>
        <begin position="136"/>
        <end position="168"/>
    </location>
</feature>
<feature type="region of interest" description="Disordered" evidence="5">
    <location>
        <begin position="1016"/>
        <end position="1069"/>
    </location>
</feature>
<feature type="short sequence motif" description="DEAH box" evidence="2">
    <location>
        <begin position="322"/>
        <end position="325"/>
    </location>
</feature>
<feature type="compositionally biased region" description="Basic and acidic residues" evidence="5">
    <location>
        <begin position="1"/>
        <end position="10"/>
    </location>
</feature>
<feature type="compositionally biased region" description="Acidic residues" evidence="5">
    <location>
        <begin position="15"/>
        <end position="37"/>
    </location>
</feature>
<feature type="compositionally biased region" description="Acidic residues" evidence="5">
    <location>
        <begin position="45"/>
        <end position="78"/>
    </location>
</feature>
<feature type="compositionally biased region" description="Basic and acidic residues" evidence="5">
    <location>
        <begin position="79"/>
        <end position="93"/>
    </location>
</feature>
<feature type="compositionally biased region" description="Basic residues" evidence="5">
    <location>
        <begin position="146"/>
        <end position="156"/>
    </location>
</feature>
<feature type="compositionally biased region" description="Polar residues" evidence="5">
    <location>
        <begin position="1032"/>
        <end position="1051"/>
    </location>
</feature>
<feature type="compositionally biased region" description="Basic and acidic residues" evidence="5">
    <location>
        <begin position="1059"/>
        <end position="1069"/>
    </location>
</feature>
<feature type="binding site" evidence="2">
    <location>
        <begin position="219"/>
        <end position="226"/>
    </location>
    <ligand>
        <name>ATP</name>
        <dbReference type="ChEBI" id="CHEBI:30616"/>
    </ligand>
</feature>
<dbReference type="EC" id="3.6.4.-" evidence="10"/>
<dbReference type="EMBL" id="AC051627">
    <property type="status" value="NOT_ANNOTATED_CDS"/>
    <property type="molecule type" value="Genomic_DNA"/>
</dbReference>
<dbReference type="EMBL" id="CP002688">
    <property type="protein sequence ID" value="AED92587.1"/>
    <property type="molecule type" value="Genomic_DNA"/>
</dbReference>
<dbReference type="EMBL" id="AY035159">
    <property type="protein sequence ID" value="AAK59663.1"/>
    <property type="status" value="ALT_INIT"/>
    <property type="molecule type" value="mRNA"/>
</dbReference>
<dbReference type="RefSeq" id="NP_568365.2">
    <molecule id="F4JY24-1"/>
    <property type="nucleotide sequence ID" value="NM_121867.4"/>
</dbReference>
<dbReference type="SMR" id="F4JY24"/>
<dbReference type="FunCoup" id="F4JY24">
    <property type="interactions" value="3807"/>
</dbReference>
<dbReference type="STRING" id="3702.F4JY24"/>
<dbReference type="GlyGen" id="F4JY24">
    <property type="glycosylation" value="1 site"/>
</dbReference>
<dbReference type="iPTMnet" id="F4JY24"/>
<dbReference type="PaxDb" id="3702-AT5G18620.2"/>
<dbReference type="ProteomicsDB" id="246960">
    <molecule id="F4JY24-1"/>
</dbReference>
<dbReference type="EnsemblPlants" id="AT5G18620.1">
    <molecule id="F4JY24-1"/>
    <property type="protein sequence ID" value="AT5G18620.1"/>
    <property type="gene ID" value="AT5G18620"/>
</dbReference>
<dbReference type="GeneID" id="831980"/>
<dbReference type="Gramene" id="AT5G18620.1">
    <molecule id="F4JY24-1"/>
    <property type="protein sequence ID" value="AT5G18620.1"/>
    <property type="gene ID" value="AT5G18620"/>
</dbReference>
<dbReference type="KEGG" id="ath:AT5G18620"/>
<dbReference type="Araport" id="AT5G18620"/>
<dbReference type="TAIR" id="AT5G18620">
    <property type="gene designation" value="CHR17"/>
</dbReference>
<dbReference type="eggNOG" id="KOG0385">
    <property type="taxonomic scope" value="Eukaryota"/>
</dbReference>
<dbReference type="HOGENOM" id="CLU_000315_0_0_1"/>
<dbReference type="InParanoid" id="F4JY24"/>
<dbReference type="OMA" id="FTHINCK"/>
<dbReference type="PRO" id="PR:F4JY24"/>
<dbReference type="Proteomes" id="UP000006548">
    <property type="component" value="Chromosome 5"/>
</dbReference>
<dbReference type="ExpressionAtlas" id="F4JY24">
    <property type="expression patterns" value="baseline and differential"/>
</dbReference>
<dbReference type="GO" id="GO:0005634">
    <property type="term" value="C:nucleus"/>
    <property type="evidence" value="ECO:0007669"/>
    <property type="project" value="UniProtKB-SubCell"/>
</dbReference>
<dbReference type="GO" id="GO:0005524">
    <property type="term" value="F:ATP binding"/>
    <property type="evidence" value="ECO:0007669"/>
    <property type="project" value="UniProtKB-KW"/>
</dbReference>
<dbReference type="GO" id="GO:0003677">
    <property type="term" value="F:DNA binding"/>
    <property type="evidence" value="ECO:0007669"/>
    <property type="project" value="InterPro"/>
</dbReference>
<dbReference type="GO" id="GO:0016787">
    <property type="term" value="F:hydrolase activity"/>
    <property type="evidence" value="ECO:0007669"/>
    <property type="project" value="UniProtKB-KW"/>
</dbReference>
<dbReference type="GO" id="GO:0140750">
    <property type="term" value="F:nucleosome array spacer activity"/>
    <property type="evidence" value="ECO:0000315"/>
    <property type="project" value="GO_Central"/>
</dbReference>
<dbReference type="GO" id="GO:0031491">
    <property type="term" value="F:nucleosome binding"/>
    <property type="evidence" value="ECO:0007669"/>
    <property type="project" value="InterPro"/>
</dbReference>
<dbReference type="GO" id="GO:1900036">
    <property type="term" value="P:positive regulation of cellular response to heat"/>
    <property type="evidence" value="ECO:0000315"/>
    <property type="project" value="UniProtKB"/>
</dbReference>
<dbReference type="CDD" id="cd17997">
    <property type="entry name" value="DEXHc_SMARCA1_SMARCA5"/>
    <property type="match status" value="1"/>
</dbReference>
<dbReference type="CDD" id="cd00167">
    <property type="entry name" value="SANT"/>
    <property type="match status" value="1"/>
</dbReference>
<dbReference type="CDD" id="cd18793">
    <property type="entry name" value="SF2_C_SNF"/>
    <property type="match status" value="1"/>
</dbReference>
<dbReference type="FunFam" id="3.40.50.10810:FF:000028">
    <property type="entry name" value="Chromatin-remodeling complex ATPase"/>
    <property type="match status" value="1"/>
</dbReference>
<dbReference type="FunFam" id="1.10.10.60:FF:000155">
    <property type="entry name" value="ISWI chromatin-remodeling complex ATPase CHR11"/>
    <property type="match status" value="1"/>
</dbReference>
<dbReference type="FunFam" id="1.10.1040.30:FF:000002">
    <property type="entry name" value="ISWI chromatin-remodeling complex ATPase CHR11"/>
    <property type="match status" value="1"/>
</dbReference>
<dbReference type="FunFam" id="3.40.50.300:FF:000519">
    <property type="entry name" value="ISWI chromatin-remodeling complex ATPase CHR11"/>
    <property type="match status" value="1"/>
</dbReference>
<dbReference type="FunFam" id="1.10.10.60:FF:000022">
    <property type="entry name" value="ISWI chromatin-remodeling complex ATPase CHR11 isoform A"/>
    <property type="match status" value="1"/>
</dbReference>
<dbReference type="Gene3D" id="1.10.10.60">
    <property type="entry name" value="Homeodomain-like"/>
    <property type="match status" value="2"/>
</dbReference>
<dbReference type="Gene3D" id="1.20.5.1190">
    <property type="entry name" value="iswi atpase"/>
    <property type="match status" value="1"/>
</dbReference>
<dbReference type="Gene3D" id="1.10.1040.30">
    <property type="entry name" value="ISWI, HAND domain"/>
    <property type="match status" value="1"/>
</dbReference>
<dbReference type="Gene3D" id="3.40.50.300">
    <property type="entry name" value="P-loop containing nucleotide triphosphate hydrolases"/>
    <property type="match status" value="1"/>
</dbReference>
<dbReference type="Gene3D" id="3.40.50.10810">
    <property type="entry name" value="Tandem AAA-ATPase domain"/>
    <property type="match status" value="1"/>
</dbReference>
<dbReference type="InterPro" id="IPR014001">
    <property type="entry name" value="Helicase_ATP-bd"/>
</dbReference>
<dbReference type="InterPro" id="IPR001650">
    <property type="entry name" value="Helicase_C-like"/>
</dbReference>
<dbReference type="InterPro" id="IPR009057">
    <property type="entry name" value="Homeodomain-like_sf"/>
</dbReference>
<dbReference type="InterPro" id="IPR044754">
    <property type="entry name" value="Isw1/2_DEXHc"/>
</dbReference>
<dbReference type="InterPro" id="IPR015194">
    <property type="entry name" value="ISWI_HAND-dom"/>
</dbReference>
<dbReference type="InterPro" id="IPR036306">
    <property type="entry name" value="ISWI_HAND-dom_sf"/>
</dbReference>
<dbReference type="InterPro" id="IPR027417">
    <property type="entry name" value="P-loop_NTPase"/>
</dbReference>
<dbReference type="InterPro" id="IPR001005">
    <property type="entry name" value="SANT/Myb"/>
</dbReference>
<dbReference type="InterPro" id="IPR017884">
    <property type="entry name" value="SANT_dom"/>
</dbReference>
<dbReference type="InterPro" id="IPR015195">
    <property type="entry name" value="SLIDE"/>
</dbReference>
<dbReference type="InterPro" id="IPR038718">
    <property type="entry name" value="SNF2-like_sf"/>
</dbReference>
<dbReference type="InterPro" id="IPR049730">
    <property type="entry name" value="SNF2/RAD54-like_C"/>
</dbReference>
<dbReference type="InterPro" id="IPR000330">
    <property type="entry name" value="SNF2_N"/>
</dbReference>
<dbReference type="PANTHER" id="PTHR45623">
    <property type="entry name" value="CHROMODOMAIN-HELICASE-DNA-BINDING PROTEIN 3-RELATED-RELATED"/>
    <property type="match status" value="1"/>
</dbReference>
<dbReference type="PANTHER" id="PTHR45623:SF49">
    <property type="entry name" value="SWI_SNF-RELATED MATRIX-ASSOCIATED ACTIN-DEPENDENT REGULATOR OF CHROMATIN SUBFAMILY A MEMBER 5"/>
    <property type="match status" value="1"/>
</dbReference>
<dbReference type="Pfam" id="PF09110">
    <property type="entry name" value="HAND"/>
    <property type="match status" value="1"/>
</dbReference>
<dbReference type="Pfam" id="PF00271">
    <property type="entry name" value="Helicase_C"/>
    <property type="match status" value="1"/>
</dbReference>
<dbReference type="Pfam" id="PF09111">
    <property type="entry name" value="SLIDE"/>
    <property type="match status" value="1"/>
</dbReference>
<dbReference type="Pfam" id="PF00176">
    <property type="entry name" value="SNF2-rel_dom"/>
    <property type="match status" value="1"/>
</dbReference>
<dbReference type="SMART" id="SM00487">
    <property type="entry name" value="DEXDc"/>
    <property type="match status" value="1"/>
</dbReference>
<dbReference type="SMART" id="SM00490">
    <property type="entry name" value="HELICc"/>
    <property type="match status" value="1"/>
</dbReference>
<dbReference type="SMART" id="SM00717">
    <property type="entry name" value="SANT"/>
    <property type="match status" value="2"/>
</dbReference>
<dbReference type="SUPFAM" id="SSF101224">
    <property type="entry name" value="HAND domain of the nucleosome remodeling ATPase ISWI"/>
    <property type="match status" value="1"/>
</dbReference>
<dbReference type="SUPFAM" id="SSF46689">
    <property type="entry name" value="Homeodomain-like"/>
    <property type="match status" value="2"/>
</dbReference>
<dbReference type="SUPFAM" id="SSF52540">
    <property type="entry name" value="P-loop containing nucleoside triphosphate hydrolases"/>
    <property type="match status" value="2"/>
</dbReference>
<dbReference type="PROSITE" id="PS51192">
    <property type="entry name" value="HELICASE_ATP_BIND_1"/>
    <property type="match status" value="1"/>
</dbReference>
<dbReference type="PROSITE" id="PS51194">
    <property type="entry name" value="HELICASE_CTER"/>
    <property type="match status" value="1"/>
</dbReference>
<dbReference type="PROSITE" id="PS51293">
    <property type="entry name" value="SANT"/>
    <property type="match status" value="1"/>
</dbReference>
<comment type="function">
    <text evidence="1 6 7 8">Possesses intrinsic ATP-dependent nucleosome-remodeling activity. Constitutes the catalytic subunit of several complexes capable of forming ordered nucleosome arrays on chromatin (By similarity). Involved in the formation of nucleosome distribution patterns (PubMed:24606212). Required for the maintenance of the plant vegetative phase. In association with RLT1 or RLT2 may prevent the early activation of the vegetative-to-reproductive transition by regulating key genes that contribute to flower timing, such as FT, SEP1, SEP3, AGL8/FUL, SOC1 and FLC (PubMed:22694359). Necessary to acquire heat stress (HS) memory (PubMed:27680998).</text>
</comment>
<comment type="subunit">
    <text evidence="6 8">Interacts with RLT1 (PubMed:22694359). Binds to FGT1 (PubMed:27680998).</text>
</comment>
<comment type="subcellular location">
    <subcellularLocation>
        <location evidence="4">Nucleus</location>
    </subcellularLocation>
</comment>
<comment type="alternative products">
    <event type="alternative splicing"/>
    <isoform>
        <id>F4JY24-1</id>
        <name>1</name>
        <sequence type="displayed"/>
    </isoform>
    <text evidence="10">A number of isoforms are produced. According to EST sequences.</text>
</comment>
<comment type="tissue specificity">
    <text evidence="6">Highly expressed in growing tissues such as inflorescence and flower meristems, young leaves and floral organs. Expressed in roots, rosette and cauline leaves, stems, flowers, inflorescences and siliques.</text>
</comment>
<comment type="disruption phenotype">
    <text evidence="6 8">No visible phenotype under normal growth conditions, but the double mutant plants chr11-1 and chr17-1 are very small and display early flowering and sterility (PubMed:22694359). Premature decline of expression of HSA32, HSP18.2, HSP21, HSP22 and HSP101 after HS in the double mutant plants chr11-1 and chr17-1 (PubMed:27680998).</text>
</comment>
<comment type="similarity">
    <text evidence="10">Belongs to the SNF2/RAD54 helicase family. ISWI subfamily.</text>
</comment>
<comment type="sequence caution" evidence="10">
    <conflict type="erroneous initiation">
        <sequence resource="EMBL-CDS" id="AAK59663"/>
    </conflict>
    <text>Truncated N-terminus.</text>
</comment>
<accession>F4JY24</accession>
<accession>Q94C61</accession>
<name>CHR17_ARATH</name>
<reference key="1">
    <citation type="journal article" date="2000" name="Nature">
        <title>Sequence and analysis of chromosome 5 of the plant Arabidopsis thaliana.</title>
        <authorList>
            <person name="Tabata S."/>
            <person name="Kaneko T."/>
            <person name="Nakamura Y."/>
            <person name="Kotani H."/>
            <person name="Kato T."/>
            <person name="Asamizu E."/>
            <person name="Miyajima N."/>
            <person name="Sasamoto S."/>
            <person name="Kimura T."/>
            <person name="Hosouchi T."/>
            <person name="Kawashima K."/>
            <person name="Kohara M."/>
            <person name="Matsumoto M."/>
            <person name="Matsuno A."/>
            <person name="Muraki A."/>
            <person name="Nakayama S."/>
            <person name="Nakazaki N."/>
            <person name="Naruo K."/>
            <person name="Okumura S."/>
            <person name="Shinpo S."/>
            <person name="Takeuchi C."/>
            <person name="Wada T."/>
            <person name="Watanabe A."/>
            <person name="Yamada M."/>
            <person name="Yasuda M."/>
            <person name="Sato S."/>
            <person name="de la Bastide M."/>
            <person name="Huang E."/>
            <person name="Spiegel L."/>
            <person name="Gnoj L."/>
            <person name="O'Shaughnessy A."/>
            <person name="Preston R."/>
            <person name="Habermann K."/>
            <person name="Murray J."/>
            <person name="Johnson D."/>
            <person name="Rohlfing T."/>
            <person name="Nelson J."/>
            <person name="Stoneking T."/>
            <person name="Pepin K."/>
            <person name="Spieth J."/>
            <person name="Sekhon M."/>
            <person name="Armstrong J."/>
            <person name="Becker M."/>
            <person name="Belter E."/>
            <person name="Cordum H."/>
            <person name="Cordes M."/>
            <person name="Courtney L."/>
            <person name="Courtney W."/>
            <person name="Dante M."/>
            <person name="Du H."/>
            <person name="Edwards J."/>
            <person name="Fryman J."/>
            <person name="Haakensen B."/>
            <person name="Lamar E."/>
            <person name="Latreille P."/>
            <person name="Leonard S."/>
            <person name="Meyer R."/>
            <person name="Mulvaney E."/>
            <person name="Ozersky P."/>
            <person name="Riley A."/>
            <person name="Strowmatt C."/>
            <person name="Wagner-McPherson C."/>
            <person name="Wollam A."/>
            <person name="Yoakum M."/>
            <person name="Bell M."/>
            <person name="Dedhia N."/>
            <person name="Parnell L."/>
            <person name="Shah R."/>
            <person name="Rodriguez M."/>
            <person name="Hoon See L."/>
            <person name="Vil D."/>
            <person name="Baker J."/>
            <person name="Kirchoff K."/>
            <person name="Toth K."/>
            <person name="King L."/>
            <person name="Bahret A."/>
            <person name="Miller B."/>
            <person name="Marra M.A."/>
            <person name="Martienssen R."/>
            <person name="McCombie W.R."/>
            <person name="Wilson R.K."/>
            <person name="Murphy G."/>
            <person name="Bancroft I."/>
            <person name="Volckaert G."/>
            <person name="Wambutt R."/>
            <person name="Duesterhoeft A."/>
            <person name="Stiekema W."/>
            <person name="Pohl T."/>
            <person name="Entian K.-D."/>
            <person name="Terryn N."/>
            <person name="Hartley N."/>
            <person name="Bent E."/>
            <person name="Johnson S."/>
            <person name="Langham S.-A."/>
            <person name="McCullagh B."/>
            <person name="Robben J."/>
            <person name="Grymonprez B."/>
            <person name="Zimmermann W."/>
            <person name="Ramsperger U."/>
            <person name="Wedler H."/>
            <person name="Balke K."/>
            <person name="Wedler E."/>
            <person name="Peters S."/>
            <person name="van Staveren M."/>
            <person name="Dirkse W."/>
            <person name="Mooijman P."/>
            <person name="Klein Lankhorst R."/>
            <person name="Weitzenegger T."/>
            <person name="Bothe G."/>
            <person name="Rose M."/>
            <person name="Hauf J."/>
            <person name="Berneiser S."/>
            <person name="Hempel S."/>
            <person name="Feldpausch M."/>
            <person name="Lamberth S."/>
            <person name="Villarroel R."/>
            <person name="Gielen J."/>
            <person name="Ardiles W."/>
            <person name="Bents O."/>
            <person name="Lemcke K."/>
            <person name="Kolesov G."/>
            <person name="Mayer K.F.X."/>
            <person name="Rudd S."/>
            <person name="Schoof H."/>
            <person name="Schueller C."/>
            <person name="Zaccaria P."/>
            <person name="Mewes H.-W."/>
            <person name="Bevan M."/>
            <person name="Fransz P.F."/>
        </authorList>
    </citation>
    <scope>NUCLEOTIDE SEQUENCE [LARGE SCALE GENOMIC DNA]</scope>
    <source>
        <strain>cv. Columbia</strain>
    </source>
</reference>
<reference key="2">
    <citation type="journal article" date="2017" name="Plant J.">
        <title>Araport11: a complete reannotation of the Arabidopsis thaliana reference genome.</title>
        <authorList>
            <person name="Cheng C.Y."/>
            <person name="Krishnakumar V."/>
            <person name="Chan A.P."/>
            <person name="Thibaud-Nissen F."/>
            <person name="Schobel S."/>
            <person name="Town C.D."/>
        </authorList>
    </citation>
    <scope>GENOME REANNOTATION</scope>
    <source>
        <strain>cv. Columbia</strain>
    </source>
</reference>
<reference key="3">
    <citation type="journal article" date="2003" name="Science">
        <title>Empirical analysis of transcriptional activity in the Arabidopsis genome.</title>
        <authorList>
            <person name="Yamada K."/>
            <person name="Lim J."/>
            <person name="Dale J.M."/>
            <person name="Chen H."/>
            <person name="Shinn P."/>
            <person name="Palm C.J."/>
            <person name="Southwick A.M."/>
            <person name="Wu H.C."/>
            <person name="Kim C.J."/>
            <person name="Nguyen M."/>
            <person name="Pham P.K."/>
            <person name="Cheuk R.F."/>
            <person name="Karlin-Newmann G."/>
            <person name="Liu S.X."/>
            <person name="Lam B."/>
            <person name="Sakano H."/>
            <person name="Wu T."/>
            <person name="Yu G."/>
            <person name="Miranda M."/>
            <person name="Quach H.L."/>
            <person name="Tripp M."/>
            <person name="Chang C.H."/>
            <person name="Lee J.M."/>
            <person name="Toriumi M.J."/>
            <person name="Chan M.M."/>
            <person name="Tang C.C."/>
            <person name="Onodera C.S."/>
            <person name="Deng J.M."/>
            <person name="Akiyama K."/>
            <person name="Ansari Y."/>
            <person name="Arakawa T."/>
            <person name="Banh J."/>
            <person name="Banno F."/>
            <person name="Bowser L."/>
            <person name="Brooks S.Y."/>
            <person name="Carninci P."/>
            <person name="Chao Q."/>
            <person name="Choy N."/>
            <person name="Enju A."/>
            <person name="Goldsmith A.D."/>
            <person name="Gurjal M."/>
            <person name="Hansen N.F."/>
            <person name="Hayashizaki Y."/>
            <person name="Johnson-Hopson C."/>
            <person name="Hsuan V.W."/>
            <person name="Iida K."/>
            <person name="Karnes M."/>
            <person name="Khan S."/>
            <person name="Koesema E."/>
            <person name="Ishida J."/>
            <person name="Jiang P.X."/>
            <person name="Jones T."/>
            <person name="Kawai J."/>
            <person name="Kamiya A."/>
            <person name="Meyers C."/>
            <person name="Nakajima M."/>
            <person name="Narusaka M."/>
            <person name="Seki M."/>
            <person name="Sakurai T."/>
            <person name="Satou M."/>
            <person name="Tamse R."/>
            <person name="Vaysberg M."/>
            <person name="Wallender E.K."/>
            <person name="Wong C."/>
            <person name="Yamamura Y."/>
            <person name="Yuan S."/>
            <person name="Shinozaki K."/>
            <person name="Davis R.W."/>
            <person name="Theologis A."/>
            <person name="Ecker J.R."/>
        </authorList>
    </citation>
    <scope>NUCLEOTIDE SEQUENCE [LARGE SCALE MRNA] OF 1-748 AND 529-1069</scope>
    <source>
        <strain>cv. Columbia</strain>
    </source>
</reference>
<reference key="4">
    <citation type="journal article" date="2012" name="Plant J.">
        <title>Imitation Switch chromatin remodeling factors and their interacting RINGLET proteins act together in controlling the plant vegetative phase in Arabidopsis.</title>
        <authorList>
            <person name="Li G."/>
            <person name="Zhang J."/>
            <person name="Li J."/>
            <person name="Yang Z."/>
            <person name="Huang H."/>
            <person name="Xu L."/>
        </authorList>
    </citation>
    <scope>FUNCTION</scope>
    <scope>INTERACTION WITH RLT1</scope>
    <scope>TISSUE SPECIFICITY</scope>
    <scope>DISRUPTION PHENOTYPE</scope>
</reference>
<reference key="5">
    <citation type="journal article" date="2014" name="Plant J.">
        <title>ISWI proteins participate in the genome-wide nucleosome distribution in Arabidopsis.</title>
        <authorList>
            <person name="Li G."/>
            <person name="Liu S."/>
            <person name="Wang J."/>
            <person name="He J."/>
            <person name="Huang H."/>
            <person name="Zhang Y."/>
            <person name="Xu L."/>
        </authorList>
    </citation>
    <scope>FUNCTION</scope>
</reference>
<reference key="6">
    <citation type="journal article" date="2016" name="Elife">
        <title>Arabidopsis FORGETTER1 mediates stress-induced chromatin memory through nucleosome remodeling.</title>
        <authorList>
            <person name="Brzezinka K."/>
            <person name="Altmann S."/>
            <person name="Czesnick H."/>
            <person name="Nicolas P."/>
            <person name="Gorka M."/>
            <person name="Benke E."/>
            <person name="Kabelitz T."/>
            <person name="Jaehne F."/>
            <person name="Graf A."/>
            <person name="Kappel C."/>
            <person name="Baeurle I."/>
        </authorList>
    </citation>
    <scope>INTERACTION WITH FGT1</scope>
    <scope>FUNCTION</scope>
    <scope>DISRUPTION PHENOTYPE</scope>
    <source>
        <strain>cv. Columbia</strain>
    </source>
</reference>
<organism>
    <name type="scientific">Arabidopsis thaliana</name>
    <name type="common">Mouse-ear cress</name>
    <dbReference type="NCBI Taxonomy" id="3702"/>
    <lineage>
        <taxon>Eukaryota</taxon>
        <taxon>Viridiplantae</taxon>
        <taxon>Streptophyta</taxon>
        <taxon>Embryophyta</taxon>
        <taxon>Tracheophyta</taxon>
        <taxon>Spermatophyta</taxon>
        <taxon>Magnoliopsida</taxon>
        <taxon>eudicotyledons</taxon>
        <taxon>Gunneridae</taxon>
        <taxon>Pentapetalae</taxon>
        <taxon>rosids</taxon>
        <taxon>malvids</taxon>
        <taxon>Brassicales</taxon>
        <taxon>Brassicaceae</taxon>
        <taxon>Camelineae</taxon>
        <taxon>Arabidopsis</taxon>
    </lineage>
</organism>